<keyword id="KW-0028">Amino-acid biosynthesis</keyword>
<keyword id="KW-0963">Cytoplasm</keyword>
<keyword id="KW-0413">Isomerase</keyword>
<keyword id="KW-0457">Lysine biosynthesis</keyword>
<keyword id="KW-1185">Reference proteome</keyword>
<name>DAPF_RIPO1</name>
<accession>B7K1E7</accession>
<gene>
    <name evidence="1" type="primary">dapF</name>
    <name type="ordered locus">PCC8801_2326</name>
</gene>
<comment type="function">
    <text evidence="1">Catalyzes the stereoinversion of LL-2,6-diaminopimelate (L,L-DAP) to meso-diaminopimelate (meso-DAP), a precursor of L-lysine and an essential component of the bacterial peptidoglycan.</text>
</comment>
<comment type="catalytic activity">
    <reaction evidence="1">
        <text>(2S,6S)-2,6-diaminopimelate = meso-2,6-diaminopimelate</text>
        <dbReference type="Rhea" id="RHEA:15393"/>
        <dbReference type="ChEBI" id="CHEBI:57609"/>
        <dbReference type="ChEBI" id="CHEBI:57791"/>
        <dbReference type="EC" id="5.1.1.7"/>
    </reaction>
</comment>
<comment type="pathway">
    <text evidence="1">Amino-acid biosynthesis; L-lysine biosynthesis via DAP pathway; DL-2,6-diaminopimelate from LL-2,6-diaminopimelate: step 1/1.</text>
</comment>
<comment type="subunit">
    <text evidence="1">Homodimer.</text>
</comment>
<comment type="subcellular location">
    <subcellularLocation>
        <location evidence="1">Cytoplasm</location>
    </subcellularLocation>
</comment>
<comment type="similarity">
    <text evidence="1">Belongs to the diaminopimelate epimerase family.</text>
</comment>
<protein>
    <recommendedName>
        <fullName evidence="1">Diaminopimelate epimerase</fullName>
        <shortName evidence="1">DAP epimerase</shortName>
        <ecNumber evidence="1">5.1.1.7</ecNumber>
    </recommendedName>
    <alternativeName>
        <fullName evidence="1">PLP-independent amino acid racemase</fullName>
    </alternativeName>
</protein>
<sequence length="281" mass="30810">MSIEFSKYQGLGNDFILIDNRSSHTPLVSPEQAIKMCDRHFGIGADGVIFVLPGTANTDYTMRIFNSDGSEPQMCGNGIRCLARFIAHLEGGETLGKTYQIDTLAGVISPRLEAQGQVKVDMGTPYLLAKEIPTTLGNSNDKVINHSLEVAGQTWLVTCVSMGNPHCITFVKDVWGIDLPTLGPQFEHHPGFPERTNTEFIEVVRRDYVKMRVWERGAGITLACGTGACASVVAGVLTNQCDRYCIVELPGGNLTIEWSEMDNRIYMTGPAELVFTGIYNL</sequence>
<proteinExistence type="inferred from homology"/>
<organism>
    <name type="scientific">Rippkaea orientalis (strain PCC 8801 / RF-1)</name>
    <name type="common">Cyanothece sp. (strain PCC 8801)</name>
    <dbReference type="NCBI Taxonomy" id="41431"/>
    <lineage>
        <taxon>Bacteria</taxon>
        <taxon>Bacillati</taxon>
        <taxon>Cyanobacteriota</taxon>
        <taxon>Cyanophyceae</taxon>
        <taxon>Oscillatoriophycideae</taxon>
        <taxon>Chroococcales</taxon>
        <taxon>Aphanothecaceae</taxon>
        <taxon>Rippkaea</taxon>
        <taxon>Rippkaea orientalis</taxon>
    </lineage>
</organism>
<feature type="chain" id="PRO_1000118666" description="Diaminopimelate epimerase">
    <location>
        <begin position="1"/>
        <end position="281"/>
    </location>
</feature>
<feature type="active site" description="Proton donor" evidence="1">
    <location>
        <position position="75"/>
    </location>
</feature>
<feature type="active site" description="Proton acceptor" evidence="1">
    <location>
        <position position="224"/>
    </location>
</feature>
<feature type="binding site" evidence="1">
    <location>
        <position position="13"/>
    </location>
    <ligand>
        <name>substrate</name>
    </ligand>
</feature>
<feature type="binding site" evidence="1">
    <location>
        <position position="66"/>
    </location>
    <ligand>
        <name>substrate</name>
    </ligand>
</feature>
<feature type="binding site" evidence="1">
    <location>
        <begin position="76"/>
        <end position="77"/>
    </location>
    <ligand>
        <name>substrate</name>
    </ligand>
</feature>
<feature type="binding site" evidence="1">
    <location>
        <position position="164"/>
    </location>
    <ligand>
        <name>substrate</name>
    </ligand>
</feature>
<feature type="binding site" evidence="1">
    <location>
        <position position="197"/>
    </location>
    <ligand>
        <name>substrate</name>
    </ligand>
</feature>
<feature type="binding site" evidence="1">
    <location>
        <begin position="215"/>
        <end position="216"/>
    </location>
    <ligand>
        <name>substrate</name>
    </ligand>
</feature>
<feature type="binding site" evidence="1">
    <location>
        <begin position="225"/>
        <end position="226"/>
    </location>
    <ligand>
        <name>substrate</name>
    </ligand>
</feature>
<feature type="site" description="Could be important to modulate the pK values of the two catalytic cysteine residues" evidence="1">
    <location>
        <position position="166"/>
    </location>
</feature>
<feature type="site" description="Could be important to modulate the pK values of the two catalytic cysteine residues" evidence="1">
    <location>
        <position position="215"/>
    </location>
</feature>
<dbReference type="EC" id="5.1.1.7" evidence="1"/>
<dbReference type="EMBL" id="CP001287">
    <property type="protein sequence ID" value="ACK66342.1"/>
    <property type="molecule type" value="Genomic_DNA"/>
</dbReference>
<dbReference type="RefSeq" id="WP_012595610.1">
    <property type="nucleotide sequence ID" value="NC_011726.1"/>
</dbReference>
<dbReference type="SMR" id="B7K1E7"/>
<dbReference type="STRING" id="41431.PCC8801_2326"/>
<dbReference type="KEGG" id="cyp:PCC8801_2326"/>
<dbReference type="eggNOG" id="COG0253">
    <property type="taxonomic scope" value="Bacteria"/>
</dbReference>
<dbReference type="HOGENOM" id="CLU_053306_2_1_3"/>
<dbReference type="OrthoDB" id="9805408at2"/>
<dbReference type="UniPathway" id="UPA00034">
    <property type="reaction ID" value="UER00025"/>
</dbReference>
<dbReference type="Proteomes" id="UP000008204">
    <property type="component" value="Chromosome"/>
</dbReference>
<dbReference type="GO" id="GO:0005829">
    <property type="term" value="C:cytosol"/>
    <property type="evidence" value="ECO:0007669"/>
    <property type="project" value="TreeGrafter"/>
</dbReference>
<dbReference type="GO" id="GO:0008837">
    <property type="term" value="F:diaminopimelate epimerase activity"/>
    <property type="evidence" value="ECO:0007669"/>
    <property type="project" value="UniProtKB-UniRule"/>
</dbReference>
<dbReference type="GO" id="GO:0009089">
    <property type="term" value="P:lysine biosynthetic process via diaminopimelate"/>
    <property type="evidence" value="ECO:0007669"/>
    <property type="project" value="UniProtKB-UniRule"/>
</dbReference>
<dbReference type="FunFam" id="3.10.310.10:FF:000009">
    <property type="entry name" value="Diaminopimelate epimerase chloroplastic"/>
    <property type="match status" value="1"/>
</dbReference>
<dbReference type="FunFam" id="3.10.310.10:FF:000011">
    <property type="entry name" value="Diaminopimelate epimerase, chloroplastic"/>
    <property type="match status" value="1"/>
</dbReference>
<dbReference type="Gene3D" id="3.10.310.10">
    <property type="entry name" value="Diaminopimelate Epimerase, Chain A, domain 1"/>
    <property type="match status" value="2"/>
</dbReference>
<dbReference type="HAMAP" id="MF_00197">
    <property type="entry name" value="DAP_epimerase"/>
    <property type="match status" value="1"/>
</dbReference>
<dbReference type="InterPro" id="IPR018510">
    <property type="entry name" value="DAP_epimerase_AS"/>
</dbReference>
<dbReference type="InterPro" id="IPR001653">
    <property type="entry name" value="DAP_epimerase_DapF"/>
</dbReference>
<dbReference type="NCBIfam" id="TIGR00652">
    <property type="entry name" value="DapF"/>
    <property type="match status" value="1"/>
</dbReference>
<dbReference type="PANTHER" id="PTHR31689:SF0">
    <property type="entry name" value="DIAMINOPIMELATE EPIMERASE"/>
    <property type="match status" value="1"/>
</dbReference>
<dbReference type="PANTHER" id="PTHR31689">
    <property type="entry name" value="DIAMINOPIMELATE EPIMERASE, CHLOROPLASTIC"/>
    <property type="match status" value="1"/>
</dbReference>
<dbReference type="Pfam" id="PF01678">
    <property type="entry name" value="DAP_epimerase"/>
    <property type="match status" value="2"/>
</dbReference>
<dbReference type="SUPFAM" id="SSF54506">
    <property type="entry name" value="Diaminopimelate epimerase-like"/>
    <property type="match status" value="2"/>
</dbReference>
<dbReference type="PROSITE" id="PS01326">
    <property type="entry name" value="DAP_EPIMERASE"/>
    <property type="match status" value="1"/>
</dbReference>
<reference key="1">
    <citation type="journal article" date="2011" name="MBio">
        <title>Novel metabolic attributes of the genus Cyanothece, comprising a group of unicellular nitrogen-fixing Cyanobacteria.</title>
        <authorList>
            <person name="Bandyopadhyay A."/>
            <person name="Elvitigala T."/>
            <person name="Welsh E."/>
            <person name="Stockel J."/>
            <person name="Liberton M."/>
            <person name="Min H."/>
            <person name="Sherman L.A."/>
            <person name="Pakrasi H.B."/>
        </authorList>
    </citation>
    <scope>NUCLEOTIDE SEQUENCE [LARGE SCALE GENOMIC DNA]</scope>
    <source>
        <strain>PCC 8801 / RF-1</strain>
    </source>
</reference>
<evidence type="ECO:0000255" key="1">
    <source>
        <dbReference type="HAMAP-Rule" id="MF_00197"/>
    </source>
</evidence>